<comment type="function">
    <text>Catalyzes the conversion of caffeic acid to ferulic acid and of 5-hydroxyferulic acid to sinapic acid. The resulting products may subsequently be converted to the corresponding alcohols that are incorporated into lignins.</text>
</comment>
<comment type="catalytic activity">
    <reaction>
        <text>(E)-caffeate + S-adenosyl-L-methionine = (E)-ferulate + S-adenosyl-L-homocysteine + H(+)</text>
        <dbReference type="Rhea" id="RHEA:20225"/>
        <dbReference type="ChEBI" id="CHEBI:15378"/>
        <dbReference type="ChEBI" id="CHEBI:29749"/>
        <dbReference type="ChEBI" id="CHEBI:57770"/>
        <dbReference type="ChEBI" id="CHEBI:57856"/>
        <dbReference type="ChEBI" id="CHEBI:59789"/>
        <dbReference type="EC" id="2.1.1.68"/>
    </reaction>
</comment>
<comment type="pathway">
    <text>Aromatic compound metabolism; phenylpropanoid biosynthesis.</text>
</comment>
<comment type="subunit">
    <text evidence="1">Homodimer.</text>
</comment>
<comment type="similarity">
    <text evidence="2">Belongs to the class I-like SAM-binding methyltransferase superfamily. Cation-independent O-methyltransferase family. COMT subfamily.</text>
</comment>
<keyword id="KW-0438">Lignin biosynthesis</keyword>
<keyword id="KW-0489">Methyltransferase</keyword>
<keyword id="KW-0949">S-adenosyl-L-methionine</keyword>
<keyword id="KW-0808">Transferase</keyword>
<dbReference type="EC" id="2.1.1.68"/>
<dbReference type="EMBL" id="AF154917">
    <property type="protein sequence ID" value="AAD38189.1"/>
    <property type="molecule type" value="mRNA"/>
</dbReference>
<dbReference type="SMR" id="Q9XGW0"/>
<dbReference type="SABIO-RK" id="Q9XGW0"/>
<dbReference type="UniPathway" id="UPA00711"/>
<dbReference type="GO" id="GO:0047763">
    <property type="term" value="F:caffeate O-methyltransferase activity"/>
    <property type="evidence" value="ECO:0007669"/>
    <property type="project" value="UniProtKB-EC"/>
</dbReference>
<dbReference type="GO" id="GO:0046983">
    <property type="term" value="F:protein dimerization activity"/>
    <property type="evidence" value="ECO:0007669"/>
    <property type="project" value="InterPro"/>
</dbReference>
<dbReference type="GO" id="GO:0009809">
    <property type="term" value="P:lignin biosynthetic process"/>
    <property type="evidence" value="ECO:0007669"/>
    <property type="project" value="UniProtKB-KW"/>
</dbReference>
<dbReference type="GO" id="GO:0032259">
    <property type="term" value="P:methylation"/>
    <property type="evidence" value="ECO:0007669"/>
    <property type="project" value="UniProtKB-KW"/>
</dbReference>
<dbReference type="CDD" id="cd02440">
    <property type="entry name" value="AdoMet_MTases"/>
    <property type="match status" value="1"/>
</dbReference>
<dbReference type="FunFam" id="1.10.10.10:FF:000357">
    <property type="entry name" value="Caffeic acid 3-O-methyltransferase"/>
    <property type="match status" value="1"/>
</dbReference>
<dbReference type="FunFam" id="3.40.50.150:FF:000061">
    <property type="entry name" value="Caffeic acid O-methyltransferase"/>
    <property type="match status" value="1"/>
</dbReference>
<dbReference type="Gene3D" id="3.40.50.150">
    <property type="entry name" value="Vaccinia Virus protein VP39"/>
    <property type="match status" value="1"/>
</dbReference>
<dbReference type="Gene3D" id="1.10.10.10">
    <property type="entry name" value="Winged helix-like DNA-binding domain superfamily/Winged helix DNA-binding domain"/>
    <property type="match status" value="1"/>
</dbReference>
<dbReference type="InterPro" id="IPR016461">
    <property type="entry name" value="COMT-like"/>
</dbReference>
<dbReference type="InterPro" id="IPR001077">
    <property type="entry name" value="O_MeTrfase_dom"/>
</dbReference>
<dbReference type="InterPro" id="IPR012967">
    <property type="entry name" value="Plant_O-MeTrfase_dimerisation"/>
</dbReference>
<dbReference type="InterPro" id="IPR029063">
    <property type="entry name" value="SAM-dependent_MTases_sf"/>
</dbReference>
<dbReference type="InterPro" id="IPR036388">
    <property type="entry name" value="WH-like_DNA-bd_sf"/>
</dbReference>
<dbReference type="InterPro" id="IPR036390">
    <property type="entry name" value="WH_DNA-bd_sf"/>
</dbReference>
<dbReference type="PANTHER" id="PTHR11746">
    <property type="entry name" value="O-METHYLTRANSFERASE"/>
    <property type="match status" value="1"/>
</dbReference>
<dbReference type="Pfam" id="PF08100">
    <property type="entry name" value="Dimerisation"/>
    <property type="match status" value="1"/>
</dbReference>
<dbReference type="Pfam" id="PF00891">
    <property type="entry name" value="Methyltransf_2"/>
    <property type="match status" value="1"/>
</dbReference>
<dbReference type="PIRSF" id="PIRSF005739">
    <property type="entry name" value="O-mtase"/>
    <property type="match status" value="1"/>
</dbReference>
<dbReference type="SUPFAM" id="SSF53335">
    <property type="entry name" value="S-adenosyl-L-methionine-dependent methyltransferases"/>
    <property type="match status" value="1"/>
</dbReference>
<dbReference type="SUPFAM" id="SSF46785">
    <property type="entry name" value="Winged helix' DNA-binding domain"/>
    <property type="match status" value="1"/>
</dbReference>
<dbReference type="PROSITE" id="PS51683">
    <property type="entry name" value="SAM_OMT_II"/>
    <property type="match status" value="1"/>
</dbReference>
<organism>
    <name type="scientific">Ocimum basilicum</name>
    <name type="common">Sweet basil</name>
    <dbReference type="NCBI Taxonomy" id="39350"/>
    <lineage>
        <taxon>Eukaryota</taxon>
        <taxon>Viridiplantae</taxon>
        <taxon>Streptophyta</taxon>
        <taxon>Embryophyta</taxon>
        <taxon>Tracheophyta</taxon>
        <taxon>Spermatophyta</taxon>
        <taxon>Magnoliopsida</taxon>
        <taxon>eudicotyledons</taxon>
        <taxon>Gunneridae</taxon>
        <taxon>Pentapetalae</taxon>
        <taxon>asterids</taxon>
        <taxon>lamiids</taxon>
        <taxon>Lamiales</taxon>
        <taxon>Lamiaceae</taxon>
        <taxon>Nepetoideae</taxon>
        <taxon>Ocimeae</taxon>
        <taxon>Ociminae</taxon>
        <taxon>Ocimum</taxon>
    </lineage>
</organism>
<gene>
    <name type="primary">COMT1</name>
</gene>
<evidence type="ECO:0000250" key="1"/>
<evidence type="ECO:0000255" key="2">
    <source>
        <dbReference type="PROSITE-ProRule" id="PRU01020"/>
    </source>
</evidence>
<feature type="chain" id="PRO_0000063205" description="Caffeic acid 3-O-methyltransferase 1">
    <location>
        <begin position="1"/>
        <end position="361"/>
    </location>
</feature>
<feature type="region of interest" description="Substrate binding" evidence="1">
    <location>
        <begin position="160"/>
        <end position="178"/>
    </location>
</feature>
<feature type="active site" description="Proton acceptor" evidence="2">
    <location>
        <position position="267"/>
    </location>
</feature>
<feature type="binding site" evidence="1">
    <location>
        <begin position="128"/>
        <end position="134"/>
    </location>
    <ligand>
        <name>substrate</name>
    </ligand>
</feature>
<feature type="binding site" evidence="2">
    <location>
        <position position="206"/>
    </location>
    <ligand>
        <name>S-adenosyl-L-methionine</name>
        <dbReference type="ChEBI" id="CHEBI:59789"/>
    </ligand>
</feature>
<feature type="binding site" evidence="2">
    <location>
        <position position="229"/>
    </location>
    <ligand>
        <name>S-adenosyl-L-methionine</name>
        <dbReference type="ChEBI" id="CHEBI:59789"/>
    </ligand>
</feature>
<feature type="binding site" evidence="2">
    <location>
        <position position="249"/>
    </location>
    <ligand>
        <name>S-adenosyl-L-methionine</name>
        <dbReference type="ChEBI" id="CHEBI:59789"/>
    </ligand>
</feature>
<feature type="binding site" evidence="2">
    <location>
        <position position="250"/>
    </location>
    <ligand>
        <name>S-adenosyl-L-methionine</name>
        <dbReference type="ChEBI" id="CHEBI:59789"/>
    </ligand>
</feature>
<feature type="binding site" evidence="2">
    <location>
        <position position="263"/>
    </location>
    <ligand>
        <name>S-adenosyl-L-methionine</name>
        <dbReference type="ChEBI" id="CHEBI:59789"/>
    </ligand>
</feature>
<reference key="1">
    <citation type="online journal article" date="1999" name="Plant Gene Register">
        <title>Nucleotide sequences of two cDNAs encoding caffeic acid O-methyltransferases from sweet basil (Ocimum basilicum).</title>
        <authorList>
            <person name="Wang J."/>
            <person name="Dudareva N."/>
            <person name="Kish C.M."/>
            <person name="Simon J.E."/>
            <person name="Lewinsohn E."/>
            <person name="Pichersky E."/>
        </authorList>
        <locator>PGR99-105</locator>
    </citation>
    <scope>NUCLEOTIDE SEQUENCE [MRNA]</scope>
    <source>
        <strain>cv. EMX-1</strain>
    </source>
</reference>
<accession>Q9XGW0</accession>
<sequence>MGSATNTPQINSDEEENFLFAMQLASASVLPMVLKSAIELDLLELIKKSGAGAFVSPVDLAAQLPTTNPDAHVMLDRILRLLTSYAILECRLKTLPDGGVERLYGLAPVCKFLTKNEDGVSMAPLTLMNQDKVLMESWYHLSDAVVDGGIPFNKAYGMTAFEYHGTDPRFNKVFNQGMSNHSTITMKKILETYTGFDGLKTVVDVGGGTGATLNMIVSKYPSIKGINFDLPHVIEDAPSYPGVEHVGGDMFVSVPKGDAIFMKWICHDWSDEHCVKFLKNCYDALPQNGKVILAECVLPEAPDTGLATKNVVHIDVIMLAHNPGGKERTEKEFQGLAKAAGFKQFNKACCAYNTWIMELLK</sequence>
<name>COMT1_OCIBA</name>
<proteinExistence type="evidence at transcript level"/>
<protein>
    <recommendedName>
        <fullName>Caffeic acid 3-O-methyltransferase 1</fullName>
        <shortName>CAOMT-1</shortName>
        <shortName>COMT-1</shortName>
        <ecNumber>2.1.1.68</ecNumber>
    </recommendedName>
    <alternativeName>
        <fullName>S-adenosysl-L-methionine:caffeic acid 3-O-methyltransferase 1</fullName>
    </alternativeName>
</protein>